<organism>
    <name type="scientific">Nicotiana tabacum</name>
    <name type="common">Common tobacco</name>
    <dbReference type="NCBI Taxonomy" id="4097"/>
    <lineage>
        <taxon>Eukaryota</taxon>
        <taxon>Viridiplantae</taxon>
        <taxon>Streptophyta</taxon>
        <taxon>Embryophyta</taxon>
        <taxon>Tracheophyta</taxon>
        <taxon>Spermatophyta</taxon>
        <taxon>Magnoliopsida</taxon>
        <taxon>eudicotyledons</taxon>
        <taxon>Gunneridae</taxon>
        <taxon>Pentapetalae</taxon>
        <taxon>asterids</taxon>
        <taxon>lamiids</taxon>
        <taxon>Solanales</taxon>
        <taxon>Solanaceae</taxon>
        <taxon>Nicotianoideae</taxon>
        <taxon>Nicotianeae</taxon>
        <taxon>Nicotiana</taxon>
    </lineage>
</organism>
<reference key="1">
    <citation type="journal article" date="2005" name="Proc. Natl. Acad. Sci. U.S.A.">
        <title>Conversion of nicotine to nornicotine in Nicotiana tabacum is mediated by CYP82E4, a cytochrome P450 monooxygenase.</title>
        <authorList>
            <person name="Siminszky B."/>
            <person name="Gavilano L."/>
            <person name="Bowen S.W."/>
            <person name="Dewey R.E."/>
        </authorList>
    </citation>
    <scope>NUCLEOTIDE SEQUENCE [MRNA]</scope>
    <scope>VARIANT 2-VAL-PHE-3 DELINS LEU-SER</scope>
    <scope>FUNCTION</scope>
    <scope>CATALYTIC ACTIVITY</scope>
    <scope>PATHWAY</scope>
    <source>
        <strain>cv. Burley DH91-1307-46</strain>
        <strain>cv. Petit Havana</strain>
    </source>
</reference>
<reference key="2">
    <citation type="submission" date="2005-09" db="EMBL/GenBank/DDBJ databases">
        <title>Cloning of cytochrome P450 genes from Nicotiana.</title>
        <authorList>
            <person name="Xu D."/>
            <person name="Shen Y."/>
            <person name="Nielsen M.T."/>
        </authorList>
    </citation>
    <scope>NUCLEOTIDE SEQUENCE [MRNA]</scope>
    <scope>VARIANTS GLN-61; LEU-74; ASP-99; VAL-191; GLU-217; SER-231; ALA-252; GLU-309; GLY-314; MET-335; CYS-353; VAL-410; VAL-413; LEU-416; PRO-423; GLY-439; PRO-452; ILE-471 AND SER-488</scope>
    <source>
        <strain>cv. Burley 4407</strain>
    </source>
</reference>
<reference key="3">
    <citation type="journal article" date="2007" name="Physiol. Plantarum">
        <title>Biochemical and molecular characterizations of nicotine demethylase in tobacco.</title>
        <authorList>
            <person name="Xu D."/>
            <person name="Shen Y."/>
            <person name="Chappell J."/>
            <person name="Cui M."/>
            <person name="Nielsen M.T."/>
        </authorList>
    </citation>
    <scope>NUCLEOTIDE SEQUENCE [MRNA]</scope>
    <scope>FUNCTION</scope>
    <scope>CATALYTIC ACTIVITY</scope>
    <scope>PATHWAY</scope>
    <scope>BIOPHYSICOCHEMICAL PROPERTIES</scope>
    <source>
        <strain>cv. Burley 4407</strain>
    </source>
</reference>
<reference key="4">
    <citation type="submission" date="2012-11" db="EMBL/GenBank/DDBJ databases">
        <title>Cloning of CYP82E4 gene in Nicotiana tabacum.</title>
        <authorList>
            <person name="Yang J."/>
            <person name="Sun B."/>
            <person name="Zhang F."/>
            <person name="Zhou G.-J."/>
        </authorList>
    </citation>
    <scope>NUCLEOTIDE SEQUENCE [MRNA]</scope>
    <source>
        <strain>cv. B37</strain>
    </source>
</reference>
<reference key="5">
    <citation type="journal article" date="2014" name="Nat. Commun.">
        <title>The tobacco genome sequence and its comparison with those of tomato and potato.</title>
        <authorList>
            <person name="Sierro N."/>
            <person name="Battey J.N."/>
            <person name="Ouadi S."/>
            <person name="Bakaher N."/>
            <person name="Bovet L."/>
            <person name="Willig A."/>
            <person name="Goepfert S."/>
            <person name="Peitsch M.C."/>
            <person name="Ivanov N.V."/>
        </authorList>
    </citation>
    <scope>NUCLEOTIDE SEQUENCE [LARGE SCALE GENOMIC DNA]</scope>
    <source>
        <strain>cv. TN90</strain>
    </source>
</reference>
<reference key="6">
    <citation type="journal article" date="2007" name="J. Biol. Chem.">
        <title>Functional analysis of nicotine demethylase genes reveals insights into the evolution of modern tobacco.</title>
        <authorList>
            <person name="Gavilano L.B."/>
            <person name="Coleman N.P."/>
            <person name="Bowen S.W."/>
            <person name="Siminszky B."/>
        </authorList>
    </citation>
    <scope>FUNCTION</scope>
    <scope>CATALYTIC ACTIVITY</scope>
    <scope>PATHWAY</scope>
    <scope>DEVELOPMENTAL STAGE</scope>
    <scope>TISSUE SPECIFICITY</scope>
</reference>
<reference key="7">
    <citation type="journal article" date="2013" name="Phytochemistry">
        <title>Molecular genetics of alkaloid biosynthesis in Nicotiana tabacum.</title>
        <authorList>
            <person name="Dewey R.E."/>
            <person name="Xie J."/>
        </authorList>
    </citation>
    <scope>REVIEW ON ALKALOID BIOSYNTHESIS IN NICOTIANA TABACUM</scope>
</reference>
<reference key="8">
    <citation type="journal article" date="2015" name="Mol. Genet. Genomics">
        <title>Current status and prospects for the study of Nicotiana genomics, genetics, and nicotine biosynthesis genes.</title>
        <authorList>
            <person name="Wang X."/>
            <person name="Bennetzen J.L."/>
        </authorList>
    </citation>
    <scope>REVIEW ON NICOTINE BIOSYNTHESIS</scope>
</reference>
<dbReference type="EC" id="1.14.14.-" evidence="4 5 7"/>
<dbReference type="EMBL" id="DQ131885">
    <property type="protein sequence ID" value="ABA07804.1"/>
    <property type="molecule type" value="mRNA"/>
</dbReference>
<dbReference type="EMBL" id="DQ131886">
    <property type="protein sequence ID" value="ABA07805.1"/>
    <property type="molecule type" value="mRNA"/>
</dbReference>
<dbReference type="EMBL" id="DQ219341">
    <property type="protein sequence ID" value="ABD39474.1"/>
    <property type="molecule type" value="mRNA"/>
</dbReference>
<dbReference type="EMBL" id="DQ219342">
    <property type="protein sequence ID" value="ABD39475.1"/>
    <property type="molecule type" value="mRNA"/>
</dbReference>
<dbReference type="EMBL" id="DQ219343">
    <property type="protein sequence ID" value="ABD39476.1"/>
    <property type="molecule type" value="mRNA"/>
</dbReference>
<dbReference type="EMBL" id="DQ219344">
    <property type="protein sequence ID" value="ABD39477.1"/>
    <property type="molecule type" value="mRNA"/>
</dbReference>
<dbReference type="EMBL" id="DQ219345">
    <property type="protein sequence ID" value="ABD39478.1"/>
    <property type="molecule type" value="mRNA"/>
</dbReference>
<dbReference type="EMBL" id="DQ219346">
    <property type="protein sequence ID" value="ABD39479.1"/>
    <property type="molecule type" value="mRNA"/>
</dbReference>
<dbReference type="EMBL" id="DQ219347">
    <property type="protein sequence ID" value="ABD39480.1"/>
    <property type="molecule type" value="mRNA"/>
</dbReference>
<dbReference type="EMBL" id="DQ219348">
    <property type="protein sequence ID" value="ABD39481.1"/>
    <property type="molecule type" value="mRNA"/>
</dbReference>
<dbReference type="EMBL" id="DQ219349">
    <property type="protein sequence ID" value="ABD39482.1"/>
    <property type="molecule type" value="mRNA"/>
</dbReference>
<dbReference type="EMBL" id="DQ205656">
    <property type="protein sequence ID" value="ABB36475.1"/>
    <property type="molecule type" value="mRNA"/>
</dbReference>
<dbReference type="EMBL" id="KC120817">
    <property type="protein sequence ID" value="AGD93125.1"/>
    <property type="molecule type" value="mRNA"/>
</dbReference>
<dbReference type="EMBL" id="EF370115">
    <property type="protein sequence ID" value="ABN42695.1"/>
    <property type="molecule type" value="Genomic_DNA"/>
</dbReference>
<dbReference type="RefSeq" id="NP_001312976.1">
    <property type="nucleotide sequence ID" value="NM_001326047.1"/>
</dbReference>
<dbReference type="SMR" id="Q38Q87"/>
<dbReference type="STRING" id="4097.Q38Q87"/>
<dbReference type="PaxDb" id="4097-Q38Q87"/>
<dbReference type="GeneID" id="107819427"/>
<dbReference type="KEGG" id="nta:107819427"/>
<dbReference type="OrthoDB" id="1055148at2759"/>
<dbReference type="BioCyc" id="MetaCyc:MONOMER-12449"/>
<dbReference type="BRENDA" id="1.14.14.1">
    <property type="organism ID" value="3645"/>
</dbReference>
<dbReference type="BRENDA" id="1.14.14.B11">
    <property type="organism ID" value="3645"/>
</dbReference>
<dbReference type="UniPathway" id="UPA00107"/>
<dbReference type="Proteomes" id="UP000084051">
    <property type="component" value="Unplaced"/>
</dbReference>
<dbReference type="GO" id="GO:0016020">
    <property type="term" value="C:membrane"/>
    <property type="evidence" value="ECO:0007669"/>
    <property type="project" value="UniProtKB-SubCell"/>
</dbReference>
<dbReference type="GO" id="GO:0020037">
    <property type="term" value="F:heme binding"/>
    <property type="evidence" value="ECO:0007669"/>
    <property type="project" value="InterPro"/>
</dbReference>
<dbReference type="GO" id="GO:0005506">
    <property type="term" value="F:iron ion binding"/>
    <property type="evidence" value="ECO:0007669"/>
    <property type="project" value="InterPro"/>
</dbReference>
<dbReference type="GO" id="GO:0008168">
    <property type="term" value="F:methyltransferase activity"/>
    <property type="evidence" value="ECO:0007669"/>
    <property type="project" value="UniProtKB-KW"/>
</dbReference>
<dbReference type="GO" id="GO:0004497">
    <property type="term" value="F:monooxygenase activity"/>
    <property type="evidence" value="ECO:0000318"/>
    <property type="project" value="GO_Central"/>
</dbReference>
<dbReference type="GO" id="GO:0016705">
    <property type="term" value="F:oxidoreductase activity, acting on paired donors, with incorporation or reduction of molecular oxygen"/>
    <property type="evidence" value="ECO:0007669"/>
    <property type="project" value="InterPro"/>
</dbReference>
<dbReference type="GO" id="GO:0009820">
    <property type="term" value="P:alkaloid metabolic process"/>
    <property type="evidence" value="ECO:0007669"/>
    <property type="project" value="UniProtKB-KW"/>
</dbReference>
<dbReference type="GO" id="GO:0032259">
    <property type="term" value="P:methylation"/>
    <property type="evidence" value="ECO:0007669"/>
    <property type="project" value="UniProtKB-KW"/>
</dbReference>
<dbReference type="GO" id="GO:0042179">
    <property type="term" value="P:nicotine biosynthetic process"/>
    <property type="evidence" value="ECO:0007669"/>
    <property type="project" value="UniProtKB-UniPathway"/>
</dbReference>
<dbReference type="FunFam" id="1.10.630.10:FF:000026">
    <property type="entry name" value="Cytochrome P450 82C4"/>
    <property type="match status" value="1"/>
</dbReference>
<dbReference type="Gene3D" id="1.10.630.10">
    <property type="entry name" value="Cytochrome P450"/>
    <property type="match status" value="1"/>
</dbReference>
<dbReference type="InterPro" id="IPR001128">
    <property type="entry name" value="Cyt_P450"/>
</dbReference>
<dbReference type="InterPro" id="IPR017972">
    <property type="entry name" value="Cyt_P450_CS"/>
</dbReference>
<dbReference type="InterPro" id="IPR002401">
    <property type="entry name" value="Cyt_P450_E_grp-I"/>
</dbReference>
<dbReference type="InterPro" id="IPR036396">
    <property type="entry name" value="Cyt_P450_sf"/>
</dbReference>
<dbReference type="InterPro" id="IPR050651">
    <property type="entry name" value="Plant_Cytochrome_P450_Monoox"/>
</dbReference>
<dbReference type="PANTHER" id="PTHR47947">
    <property type="entry name" value="CYTOCHROME P450 82C3-RELATED"/>
    <property type="match status" value="1"/>
</dbReference>
<dbReference type="PANTHER" id="PTHR47947:SF1">
    <property type="entry name" value="CYTOCHROME P450 82E3"/>
    <property type="match status" value="1"/>
</dbReference>
<dbReference type="Pfam" id="PF00067">
    <property type="entry name" value="p450"/>
    <property type="match status" value="1"/>
</dbReference>
<dbReference type="PRINTS" id="PR00463">
    <property type="entry name" value="EP450I"/>
</dbReference>
<dbReference type="PRINTS" id="PR00385">
    <property type="entry name" value="P450"/>
</dbReference>
<dbReference type="SUPFAM" id="SSF48264">
    <property type="entry name" value="Cytochrome P450"/>
    <property type="match status" value="1"/>
</dbReference>
<dbReference type="PROSITE" id="PS00086">
    <property type="entry name" value="CYTOCHROME_P450"/>
    <property type="match status" value="1"/>
</dbReference>
<gene>
    <name evidence="8 10 11 12" type="primary">CYP82E4</name>
    <name evidence="8 10" type="synonym">CYP82E4v1</name>
    <name type="ORF">LOC107819427</name>
</gene>
<feature type="chain" id="PRO_0000455781" description="Nicotine N-demethylase CYP82E4">
    <location>
        <begin position="1"/>
        <end position="517"/>
    </location>
</feature>
<feature type="transmembrane region" description="Helical" evidence="3">
    <location>
        <begin position="2"/>
        <end position="22"/>
    </location>
</feature>
<feature type="binding site" description="axial binding residue" evidence="1">
    <location>
        <position position="457"/>
    </location>
    <ligand>
        <name>heme</name>
        <dbReference type="ChEBI" id="CHEBI:30413"/>
    </ligand>
    <ligandPart>
        <name>Fe</name>
        <dbReference type="ChEBI" id="CHEBI:18248"/>
    </ligandPart>
</feature>
<feature type="cross-link" description="Glycyl lysine isopeptide (Lys-Gly) (interchain with G-Cter in ubiquitin)" evidence="2">
    <location>
        <position position="254"/>
    </location>
</feature>
<feature type="sequence variant" description="In CYP82E4v2." evidence="4">
    <original>VF</original>
    <variation>LS</variation>
    <location>
        <begin position="2"/>
        <end position="3"/>
    </location>
</feature>
<feature type="sequence variant" description="In CYP82E4v11." evidence="6">
    <original>R</original>
    <variation>Q</variation>
    <location>
        <position position="61"/>
    </location>
</feature>
<feature type="sequence variant" description="In CYP82E4v4." evidence="6">
    <original>F</original>
    <variation>L</variation>
    <location>
        <position position="74"/>
    </location>
</feature>
<feature type="sequence variant" description="In CYP82E4v11." evidence="6">
    <original>N</original>
    <variation>D</variation>
    <location>
        <position position="99"/>
    </location>
</feature>
<feature type="sequence variant" description="In CYP82E4v7." evidence="6">
    <original>I</original>
    <variation>V</variation>
    <location>
        <position position="191"/>
    </location>
</feature>
<feature type="sequence variant" description="In CYP82E4v7." evidence="6">
    <original>K</original>
    <variation>E</variation>
    <location>
        <position position="217"/>
    </location>
</feature>
<feature type="sequence variant" description="In CYP82E4v10." evidence="6">
    <original>A</original>
    <variation>S</variation>
    <location>
        <position position="231"/>
    </location>
</feature>
<feature type="sequence variant" description="In CYP82E4v8." evidence="6">
    <original>T</original>
    <variation>A</variation>
    <location>
        <position position="252"/>
    </location>
</feature>
<feature type="sequence variant" description="In CYP82E4v12." evidence="6">
    <original>K</original>
    <variation>E</variation>
    <location>
        <position position="309"/>
    </location>
</feature>
<feature type="sequence variant" description="In CYP82E4v11." evidence="6">
    <original>S</original>
    <variation>G</variation>
    <location>
        <position position="314"/>
    </location>
</feature>
<feature type="sequence variant" description="In CYP82E4v10." evidence="6">
    <original>I</original>
    <variation>M</variation>
    <location>
        <position position="335"/>
    </location>
</feature>
<feature type="sequence variant" description="In CYP82E4v12." evidence="6">
    <original>G</original>
    <variation>C</variation>
    <location>
        <position position="353"/>
    </location>
</feature>
<feature type="sequence variant" description="In CYP82E4v8." evidence="6">
    <original>A</original>
    <variation>V</variation>
    <location>
        <position position="410"/>
    </location>
</feature>
<feature type="sequence variant" description="In CYP82E4v5." evidence="6">
    <original>M</original>
    <variation>V</variation>
    <location>
        <position position="413"/>
    </location>
</feature>
<feature type="sequence variant" description="In CYP82E4v6." evidence="6">
    <original>Q</original>
    <variation>L</variation>
    <location>
        <position position="416"/>
    </location>
</feature>
<feature type="sequence variant" description="In CYP82E4v6." evidence="6">
    <original>S</original>
    <variation>P</variation>
    <location>
        <position position="423"/>
    </location>
</feature>
<feature type="sequence variant" description="In CYP82E4v10." evidence="6">
    <original>D</original>
    <variation>G</variation>
    <location>
        <position position="439"/>
    </location>
</feature>
<feature type="sequence variant" description="In CYP82E4v12." evidence="6">
    <original>S</original>
    <variation>P</variation>
    <location>
        <position position="452"/>
    </location>
</feature>
<feature type="sequence variant" description="In CYP82E4v11." evidence="6">
    <original>M</original>
    <variation>I</variation>
    <location>
        <position position="471"/>
    </location>
</feature>
<feature type="sequence variant" description="In CYP82E4v3." evidence="6">
    <original>L</original>
    <variation>S</variation>
    <location>
        <position position="488"/>
    </location>
</feature>
<feature type="sequence conflict" description="In Ref. 4; AGD93125." evidence="13" ref="4">
    <original>R</original>
    <variation>C</variation>
    <location>
        <position position="417"/>
    </location>
</feature>
<feature type="sequence conflict" description="In Ref. 4; AGD93125." evidence="13" ref="4">
    <original>T</original>
    <variation>I</variation>
    <location>
        <position position="436"/>
    </location>
</feature>
<keyword id="KW-0017">Alkaloid metabolism</keyword>
<keyword id="KW-0349">Heme</keyword>
<keyword id="KW-0408">Iron</keyword>
<keyword id="KW-1017">Isopeptide bond</keyword>
<keyword id="KW-0472">Membrane</keyword>
<keyword id="KW-0479">Metal-binding</keyword>
<keyword id="KW-0489">Methyltransferase</keyword>
<keyword id="KW-0503">Monooxygenase</keyword>
<keyword id="KW-0560">Oxidoreductase</keyword>
<keyword id="KW-1185">Reference proteome</keyword>
<keyword id="KW-0808">Transferase</keyword>
<keyword id="KW-0812">Transmembrane</keyword>
<keyword id="KW-1133">Transmembrane helix</keyword>
<keyword id="KW-0832">Ubl conjugation</keyword>
<proteinExistence type="evidence at protein level"/>
<protein>
    <recommendedName>
        <fullName evidence="11">Nicotine N-demethylase CYP82E4</fullName>
        <shortName evidence="11">NND</shortName>
        <ecNumber evidence="4 5 7">1.14.14.-</ecNumber>
    </recommendedName>
    <alternativeName>
        <fullName evidence="8 10 11 12">Cytochrome P450 82E4</fullName>
        <shortName evidence="8 10 11 12">NtCYP82E4</shortName>
        <shortName evidence="9">NtabCYP82E4</shortName>
    </alternativeName>
</protein>
<evidence type="ECO:0000250" key="1">
    <source>
        <dbReference type="UniProtKB" id="P04798"/>
    </source>
</evidence>
<evidence type="ECO:0000250" key="2">
    <source>
        <dbReference type="UniProtKB" id="Q9SZU1"/>
    </source>
</evidence>
<evidence type="ECO:0000255" key="3"/>
<evidence type="ECO:0000269" key="4">
    <source>
    </source>
</evidence>
<evidence type="ECO:0000269" key="5">
    <source>
    </source>
</evidence>
<evidence type="ECO:0000269" key="6">
    <source ref="2"/>
</evidence>
<evidence type="ECO:0000269" key="7">
    <source ref="3"/>
</evidence>
<evidence type="ECO:0000303" key="8">
    <source>
    </source>
</evidence>
<evidence type="ECO:0000303" key="9">
    <source>
    </source>
</evidence>
<evidence type="ECO:0000303" key="10">
    <source ref="2"/>
</evidence>
<evidence type="ECO:0000303" key="11">
    <source ref="3"/>
</evidence>
<evidence type="ECO:0000303" key="12">
    <source ref="4"/>
</evidence>
<evidence type="ECO:0000305" key="13"/>
<comment type="function">
    <text evidence="4 5 7">Involved in the biosynthesis of pyridine alkaloid natural products, leading mainly to the production of anabasine, anatabine, nicotine and nornicotine, effective deterrents against herbivores with antiparasitic and pesticide properties (neurotoxins); nornicotine serves as the precursor in the synthesis of the carcinogen compound N'-nitrosonornicotine (NNN) (PubMed:16192354, PubMed:17102129, Ref.3). Catalyzes the demethylation of nicotine to form nornicotine (PubMed:16192354, PubMed:17102129, Ref.3).</text>
</comment>
<comment type="catalytic activity">
    <reaction evidence="4 5 7">
        <text>(S)-nicotine + reduced [NADPH--hemoprotein reductase] + O2 = (S)-nornicotine + formaldehyde + oxidized [NADPH--hemoprotein reductase] + H2O + H(+)</text>
        <dbReference type="Rhea" id="RHEA:70999"/>
        <dbReference type="Rhea" id="RHEA-COMP:11964"/>
        <dbReference type="Rhea" id="RHEA-COMP:11965"/>
        <dbReference type="ChEBI" id="CHEBI:15377"/>
        <dbReference type="ChEBI" id="CHEBI:15378"/>
        <dbReference type="ChEBI" id="CHEBI:15379"/>
        <dbReference type="ChEBI" id="CHEBI:16842"/>
        <dbReference type="ChEBI" id="CHEBI:57618"/>
        <dbReference type="ChEBI" id="CHEBI:58210"/>
        <dbReference type="ChEBI" id="CHEBI:59806"/>
        <dbReference type="ChEBI" id="CHEBI:190184"/>
    </reaction>
    <physiologicalReaction direction="left-to-right" evidence="4 5 7">
        <dbReference type="Rhea" id="RHEA:71000"/>
    </physiologicalReaction>
</comment>
<comment type="cofactor">
    <cofactor evidence="1">
        <name>heme</name>
        <dbReference type="ChEBI" id="CHEBI:30413"/>
    </cofactor>
</comment>
<comment type="biophysicochemical properties">
    <kinetics>
        <KM evidence="7">3.9 uM for nicotine</KM>
        <Vmax evidence="7">8.9 pmol/sec/mg enzyme with nicotine as substrate</Vmax>
    </kinetics>
</comment>
<comment type="pathway">
    <text evidence="4 5 7">Alkaloid biosynthesis; nicotine biosynthesis.</text>
</comment>
<comment type="subcellular location">
    <subcellularLocation>
        <location evidence="3">Membrane</location>
        <topology evidence="3">Single-pass membrane protein</topology>
    </subcellularLocation>
</comment>
<comment type="tissue specificity">
    <text evidence="5">Expressed at low levels in green leaves.</text>
</comment>
<comment type="developmental stage">
    <text evidence="5">Highly induced during senescence.</text>
</comment>
<comment type="similarity">
    <text evidence="13">Belongs to the cytochrome P450 family. CYP82E2 subfamily.</text>
</comment>
<name>C82E4_TOBAC</name>
<sequence length="517" mass="59359">MVFPIEAIVGLVTFTFLFFFLWTKKSQKPSKPLPPKIPGGWPVIGHLFHFNDDGDDRPLARKLGDLADKYGPVFTFRLGLPLVLVVSSYEAVKDCFSTNDAIFSNRPAFLYGDYLGYNNAMLFLANYGPYWRKNRKLVIQEVLSASRLEKFKHVRFARIQASIKNLYTRIDGNSSTINLTDWLEELNFGLIVKMIAGKNYESGKGDEQVERFKKAFKDFMILSMEFVLWDAFPIPLFKWVDFQGHVKAMKRTFKDIDSVFQNWLEEHINKREKMEVNAEGNEQDFIDVVLSKMSNEYLGEGYSRDTVIKATVFSLVLDAADTVALHINWGMALLINNQKALTKAQEEIDTKVGKDRWVEESDIKDLVYLQAIVKEVLRLYPPGPLLVPHENVEDCVVSGYHIPKGTRLFANVMKLQRDPKLWSDPDTFDPERFIATDIDFRGQYYKYIPFGSGRRSCPGMTYALQVEHLTMAHLIQGFNYRTPNDEPLDMKEGAGITIRKVNPVELIIAPRLAPELY</sequence>
<accession>Q38Q87</accession>
<accession>L7Y094</accession>
<accession>Q078P0</accession>
<accession>Q078P1</accession>
<accession>Q078P2</accession>
<accession>Q078P3</accession>
<accession>Q078P4</accession>
<accession>Q078P5</accession>
<accession>Q078P6</accession>
<accession>Q078P7</accession>
<accession>Q078P8</accession>
<accession>Q38Q86</accession>